<sequence length="612" mass="69611">MNKLSCLYCRRRKIKCDKNRPCHNCFVAKRECIIAGDNRKKRHTKTYVEALESQLANMESTLAKIKVAPVEKIPSLLAGISFKDHLSASLPNKTSYEQADTNATSKSLVDLPVSLEVRGRNTVTFYGPTSIFGTSFTSSPRPPPSASIEDTYPIIHCLQLFFKWQYAQFLFIHRESFLFEYFHRSNDNMYCSEHLIYALCAIGCRSSEDSLLVNQADAFYKMAWDALESYGLENSHITSAQCLLCLGFYKIAMGNTSHGWLLCGMAFRMGQDLGFHLDPRDWHINNVPVVSEEQAALRSRIYWGCYVADVFVSFILGRPTTLSKSDTSVPTSDDLPDFSGIEDFMLERGGAHASSITISQLLNLIVSLSNITDAILLNVFAPYSTKYGIDLRLQNVGKYNLELMKWHFELPPNLSWKKTELRDFGQSPELCFLCLYFFLIRLCLNRPFLSKKGLYVNDMTPRNICIDSIEDVKVLIRAYRENLGLHHTPLIIVYACIVSCSTVFMLFDGATPSEIVALEQDIKFFLHVLTKISKNWDLASKSINLIQKKSTMYDTNARANDTDVDFSNDKQNTHDFQISHDENLIQLFNDESNFFNLNDLGDFQSIFGGPQF</sequence>
<name>YCV2_SCHPO</name>
<gene>
    <name type="ORF">SPCC777.02</name>
</gene>
<keyword id="KW-0963">Cytoplasm</keyword>
<keyword id="KW-0238">DNA-binding</keyword>
<keyword id="KW-0479">Metal-binding</keyword>
<keyword id="KW-0539">Nucleus</keyword>
<keyword id="KW-1185">Reference proteome</keyword>
<keyword id="KW-0804">Transcription</keyword>
<keyword id="KW-0805">Transcription regulation</keyword>
<keyword id="KW-0862">Zinc</keyword>
<reference key="1">
    <citation type="journal article" date="2002" name="Nature">
        <title>The genome sequence of Schizosaccharomyces pombe.</title>
        <authorList>
            <person name="Wood V."/>
            <person name="Gwilliam R."/>
            <person name="Rajandream M.A."/>
            <person name="Lyne M.H."/>
            <person name="Lyne R."/>
            <person name="Stewart A."/>
            <person name="Sgouros J.G."/>
            <person name="Peat N."/>
            <person name="Hayles J."/>
            <person name="Baker S.G."/>
            <person name="Basham D."/>
            <person name="Bowman S."/>
            <person name="Brooks K."/>
            <person name="Brown D."/>
            <person name="Brown S."/>
            <person name="Chillingworth T."/>
            <person name="Churcher C.M."/>
            <person name="Collins M."/>
            <person name="Connor R."/>
            <person name="Cronin A."/>
            <person name="Davis P."/>
            <person name="Feltwell T."/>
            <person name="Fraser A."/>
            <person name="Gentles S."/>
            <person name="Goble A."/>
            <person name="Hamlin N."/>
            <person name="Harris D.E."/>
            <person name="Hidalgo J."/>
            <person name="Hodgson G."/>
            <person name="Holroyd S."/>
            <person name="Hornsby T."/>
            <person name="Howarth S."/>
            <person name="Huckle E.J."/>
            <person name="Hunt S."/>
            <person name="Jagels K."/>
            <person name="James K.D."/>
            <person name="Jones L."/>
            <person name="Jones M."/>
            <person name="Leather S."/>
            <person name="McDonald S."/>
            <person name="McLean J."/>
            <person name="Mooney P."/>
            <person name="Moule S."/>
            <person name="Mungall K.L."/>
            <person name="Murphy L.D."/>
            <person name="Niblett D."/>
            <person name="Odell C."/>
            <person name="Oliver K."/>
            <person name="O'Neil S."/>
            <person name="Pearson D."/>
            <person name="Quail M.A."/>
            <person name="Rabbinowitsch E."/>
            <person name="Rutherford K.M."/>
            <person name="Rutter S."/>
            <person name="Saunders D."/>
            <person name="Seeger K."/>
            <person name="Sharp S."/>
            <person name="Skelton J."/>
            <person name="Simmonds M.N."/>
            <person name="Squares R."/>
            <person name="Squares S."/>
            <person name="Stevens K."/>
            <person name="Taylor K."/>
            <person name="Taylor R.G."/>
            <person name="Tivey A."/>
            <person name="Walsh S.V."/>
            <person name="Warren T."/>
            <person name="Whitehead S."/>
            <person name="Woodward J.R."/>
            <person name="Volckaert G."/>
            <person name="Aert R."/>
            <person name="Robben J."/>
            <person name="Grymonprez B."/>
            <person name="Weltjens I."/>
            <person name="Vanstreels E."/>
            <person name="Rieger M."/>
            <person name="Schaefer M."/>
            <person name="Mueller-Auer S."/>
            <person name="Gabel C."/>
            <person name="Fuchs M."/>
            <person name="Duesterhoeft A."/>
            <person name="Fritzc C."/>
            <person name="Holzer E."/>
            <person name="Moestl D."/>
            <person name="Hilbert H."/>
            <person name="Borzym K."/>
            <person name="Langer I."/>
            <person name="Beck A."/>
            <person name="Lehrach H."/>
            <person name="Reinhardt R."/>
            <person name="Pohl T.M."/>
            <person name="Eger P."/>
            <person name="Zimmermann W."/>
            <person name="Wedler H."/>
            <person name="Wambutt R."/>
            <person name="Purnelle B."/>
            <person name="Goffeau A."/>
            <person name="Cadieu E."/>
            <person name="Dreano S."/>
            <person name="Gloux S."/>
            <person name="Lelaure V."/>
            <person name="Mottier S."/>
            <person name="Galibert F."/>
            <person name="Aves S.J."/>
            <person name="Xiang Z."/>
            <person name="Hunt C."/>
            <person name="Moore K."/>
            <person name="Hurst S.M."/>
            <person name="Lucas M."/>
            <person name="Rochet M."/>
            <person name="Gaillardin C."/>
            <person name="Tallada V.A."/>
            <person name="Garzon A."/>
            <person name="Thode G."/>
            <person name="Daga R.R."/>
            <person name="Cruzado L."/>
            <person name="Jimenez J."/>
            <person name="Sanchez M."/>
            <person name="del Rey F."/>
            <person name="Benito J."/>
            <person name="Dominguez A."/>
            <person name="Revuelta J.L."/>
            <person name="Moreno S."/>
            <person name="Armstrong J."/>
            <person name="Forsburg S.L."/>
            <person name="Cerutti L."/>
            <person name="Lowe T."/>
            <person name="McCombie W.R."/>
            <person name="Paulsen I."/>
            <person name="Potashkin J."/>
            <person name="Shpakovski G.V."/>
            <person name="Ussery D."/>
            <person name="Barrell B.G."/>
            <person name="Nurse P."/>
        </authorList>
    </citation>
    <scope>NUCLEOTIDE SEQUENCE [LARGE SCALE GENOMIC DNA]</scope>
    <source>
        <strain>972 / ATCC 24843</strain>
    </source>
</reference>
<reference key="2">
    <citation type="journal article" date="2011" name="Science">
        <title>Comparative functional genomics of the fission yeasts.</title>
        <authorList>
            <person name="Rhind N."/>
            <person name="Chen Z."/>
            <person name="Yassour M."/>
            <person name="Thompson D.A."/>
            <person name="Haas B.J."/>
            <person name="Habib N."/>
            <person name="Wapinski I."/>
            <person name="Roy S."/>
            <person name="Lin M.F."/>
            <person name="Heiman D.I."/>
            <person name="Young S.K."/>
            <person name="Furuya K."/>
            <person name="Guo Y."/>
            <person name="Pidoux A."/>
            <person name="Chen H.M."/>
            <person name="Robbertse B."/>
            <person name="Goldberg J.M."/>
            <person name="Aoki K."/>
            <person name="Bayne E.H."/>
            <person name="Berlin A.M."/>
            <person name="Desjardins C.A."/>
            <person name="Dobbs E."/>
            <person name="Dukaj L."/>
            <person name="Fan L."/>
            <person name="FitzGerald M.G."/>
            <person name="French C."/>
            <person name="Gujja S."/>
            <person name="Hansen K."/>
            <person name="Keifenheim D."/>
            <person name="Levin J.Z."/>
            <person name="Mosher R.A."/>
            <person name="Mueller C.A."/>
            <person name="Pfiffner J."/>
            <person name="Priest M."/>
            <person name="Russ C."/>
            <person name="Smialowska A."/>
            <person name="Swoboda P."/>
            <person name="Sykes S.M."/>
            <person name="Vaughn M."/>
            <person name="Vengrova S."/>
            <person name="Yoder R."/>
            <person name="Zeng Q."/>
            <person name="Allshire R."/>
            <person name="Baulcombe D."/>
            <person name="Birren B.W."/>
            <person name="Brown W."/>
            <person name="Ekwall K."/>
            <person name="Kellis M."/>
            <person name="Leatherwood J."/>
            <person name="Levin H."/>
            <person name="Margalit H."/>
            <person name="Martienssen R."/>
            <person name="Nieduszynski C.A."/>
            <person name="Spatafora J.W."/>
            <person name="Friedman N."/>
            <person name="Dalgaard J.Z."/>
            <person name="Baumann P."/>
            <person name="Niki H."/>
            <person name="Regev A."/>
            <person name="Nusbaum C."/>
        </authorList>
    </citation>
    <scope>REVISION OF GENE MODEL</scope>
</reference>
<reference key="3">
    <citation type="journal article" date="2006" name="Nat. Biotechnol.">
        <title>ORFeome cloning and global analysis of protein localization in the fission yeast Schizosaccharomyces pombe.</title>
        <authorList>
            <person name="Matsuyama A."/>
            <person name="Arai R."/>
            <person name="Yashiroda Y."/>
            <person name="Shirai A."/>
            <person name="Kamata A."/>
            <person name="Sekido S."/>
            <person name="Kobayashi Y."/>
            <person name="Hashimoto A."/>
            <person name="Hamamoto M."/>
            <person name="Hiraoka Y."/>
            <person name="Horinouchi S."/>
            <person name="Yoshida M."/>
        </authorList>
    </citation>
    <scope>SUBCELLULAR LOCATION [LARGE SCALE ANALYSIS]</scope>
</reference>
<dbReference type="EMBL" id="CU329672">
    <property type="protein sequence ID" value="CAA20706.4"/>
    <property type="molecule type" value="Genomic_DNA"/>
</dbReference>
<dbReference type="PIR" id="T11708">
    <property type="entry name" value="T11708"/>
</dbReference>
<dbReference type="RefSeq" id="NP_588248.3">
    <property type="nucleotide sequence ID" value="NM_001023238.2"/>
</dbReference>
<dbReference type="SMR" id="O74541"/>
<dbReference type="BioGRID" id="275449">
    <property type="interactions" value="8"/>
</dbReference>
<dbReference type="FunCoup" id="O74541">
    <property type="interactions" value="30"/>
</dbReference>
<dbReference type="STRING" id="284812.O74541"/>
<dbReference type="iPTMnet" id="O74541"/>
<dbReference type="PaxDb" id="4896-SPCC777.02.1"/>
<dbReference type="EnsemblFungi" id="SPCC777.02.1">
    <property type="protein sequence ID" value="SPCC777.02.1:pep"/>
    <property type="gene ID" value="SPCC777.02"/>
</dbReference>
<dbReference type="KEGG" id="spo:2538869"/>
<dbReference type="PomBase" id="SPCC777.02"/>
<dbReference type="VEuPathDB" id="FungiDB:SPCC777.02"/>
<dbReference type="eggNOG" id="ENOG502QTSE">
    <property type="taxonomic scope" value="Eukaryota"/>
</dbReference>
<dbReference type="HOGENOM" id="CLU_015811_1_0_1"/>
<dbReference type="InParanoid" id="O74541"/>
<dbReference type="OMA" id="YMADHFI"/>
<dbReference type="PRO" id="PR:O74541"/>
<dbReference type="Proteomes" id="UP000002485">
    <property type="component" value="Chromosome III"/>
</dbReference>
<dbReference type="GO" id="GO:0005829">
    <property type="term" value="C:cytosol"/>
    <property type="evidence" value="ECO:0007005"/>
    <property type="project" value="PomBase"/>
</dbReference>
<dbReference type="GO" id="GO:0005634">
    <property type="term" value="C:nucleus"/>
    <property type="evidence" value="ECO:0007005"/>
    <property type="project" value="PomBase"/>
</dbReference>
<dbReference type="GO" id="GO:0000981">
    <property type="term" value="F:DNA-binding transcription factor activity, RNA polymerase II-specific"/>
    <property type="evidence" value="ECO:0000255"/>
    <property type="project" value="PomBase"/>
</dbReference>
<dbReference type="GO" id="GO:0000978">
    <property type="term" value="F:RNA polymerase II cis-regulatory region sequence-specific DNA binding"/>
    <property type="evidence" value="ECO:0000255"/>
    <property type="project" value="PomBase"/>
</dbReference>
<dbReference type="GO" id="GO:0008270">
    <property type="term" value="F:zinc ion binding"/>
    <property type="evidence" value="ECO:0000255"/>
    <property type="project" value="PomBase"/>
</dbReference>
<dbReference type="GO" id="GO:0006351">
    <property type="term" value="P:DNA-templated transcription"/>
    <property type="evidence" value="ECO:0007669"/>
    <property type="project" value="InterPro"/>
</dbReference>
<dbReference type="GO" id="GO:0006357">
    <property type="term" value="P:regulation of transcription by RNA polymerase II"/>
    <property type="evidence" value="ECO:0000255"/>
    <property type="project" value="PomBase"/>
</dbReference>
<dbReference type="CDD" id="cd12148">
    <property type="entry name" value="fungal_TF_MHR"/>
    <property type="match status" value="1"/>
</dbReference>
<dbReference type="CDD" id="cd00067">
    <property type="entry name" value="GAL4"/>
    <property type="match status" value="1"/>
</dbReference>
<dbReference type="FunFam" id="4.10.240.10:FF:000018">
    <property type="entry name" value="Casein kinase II subunit beta"/>
    <property type="match status" value="1"/>
</dbReference>
<dbReference type="Gene3D" id="4.10.240.10">
    <property type="entry name" value="Zn(2)-C6 fungal-type DNA-binding domain"/>
    <property type="match status" value="1"/>
</dbReference>
<dbReference type="InterPro" id="IPR051615">
    <property type="entry name" value="Transcr_Regulatory_Elem"/>
</dbReference>
<dbReference type="InterPro" id="IPR007219">
    <property type="entry name" value="Transcription_factor_dom_fun"/>
</dbReference>
<dbReference type="InterPro" id="IPR036864">
    <property type="entry name" value="Zn2-C6_fun-type_DNA-bd_sf"/>
</dbReference>
<dbReference type="InterPro" id="IPR001138">
    <property type="entry name" value="Zn2Cys6_DnaBD"/>
</dbReference>
<dbReference type="PANTHER" id="PTHR31313">
    <property type="entry name" value="TY1 ENHANCER ACTIVATOR"/>
    <property type="match status" value="1"/>
</dbReference>
<dbReference type="PANTHER" id="PTHR31313:SF81">
    <property type="entry name" value="TY1 ENHANCER ACTIVATOR"/>
    <property type="match status" value="1"/>
</dbReference>
<dbReference type="Pfam" id="PF04082">
    <property type="entry name" value="Fungal_trans"/>
    <property type="match status" value="1"/>
</dbReference>
<dbReference type="Pfam" id="PF00172">
    <property type="entry name" value="Zn_clus"/>
    <property type="match status" value="1"/>
</dbReference>
<dbReference type="SMART" id="SM00906">
    <property type="entry name" value="Fungal_trans"/>
    <property type="match status" value="1"/>
</dbReference>
<dbReference type="SMART" id="SM00066">
    <property type="entry name" value="GAL4"/>
    <property type="match status" value="1"/>
</dbReference>
<dbReference type="SUPFAM" id="SSF57701">
    <property type="entry name" value="Zn2/Cys6 DNA-binding domain"/>
    <property type="match status" value="1"/>
</dbReference>
<dbReference type="PROSITE" id="PS00463">
    <property type="entry name" value="ZN2_CY6_FUNGAL_1"/>
    <property type="match status" value="1"/>
</dbReference>
<dbReference type="PROSITE" id="PS50048">
    <property type="entry name" value="ZN2_CY6_FUNGAL_2"/>
    <property type="match status" value="1"/>
</dbReference>
<organism>
    <name type="scientific">Schizosaccharomyces pombe (strain 972 / ATCC 24843)</name>
    <name type="common">Fission yeast</name>
    <dbReference type="NCBI Taxonomy" id="284812"/>
    <lineage>
        <taxon>Eukaryota</taxon>
        <taxon>Fungi</taxon>
        <taxon>Dikarya</taxon>
        <taxon>Ascomycota</taxon>
        <taxon>Taphrinomycotina</taxon>
        <taxon>Schizosaccharomycetes</taxon>
        <taxon>Schizosaccharomycetales</taxon>
        <taxon>Schizosaccharomycetaceae</taxon>
        <taxon>Schizosaccharomyces</taxon>
    </lineage>
</organism>
<evidence type="ECO:0000255" key="1">
    <source>
        <dbReference type="PROSITE-ProRule" id="PRU00227"/>
    </source>
</evidence>
<evidence type="ECO:0000269" key="2">
    <source>
    </source>
</evidence>
<comment type="subcellular location">
    <subcellularLocation>
        <location evidence="2">Cytoplasm</location>
    </subcellularLocation>
    <subcellularLocation>
        <location evidence="1 2">Nucleus</location>
    </subcellularLocation>
</comment>
<feature type="chain" id="PRO_0000310379" description="Uncharacterized transcriptional regulatory protein C777.02">
    <location>
        <begin position="1"/>
        <end position="612"/>
    </location>
</feature>
<feature type="DNA-binding region" description="Zn(2)-C6 fungal-type" evidence="1">
    <location>
        <begin position="6"/>
        <end position="32"/>
    </location>
</feature>
<protein>
    <recommendedName>
        <fullName>Uncharacterized transcriptional regulatory protein C777.02</fullName>
    </recommendedName>
</protein>
<proteinExistence type="inferred from homology"/>
<accession>O74541</accession>